<accession>O14682</accession>
<accession>B4DHJ1</accession>
<accession>E9PFU0</accession>
<accession>O75464</accession>
<accession>Q9UPG9</accession>
<proteinExistence type="evidence at protein level"/>
<keyword id="KW-0009">Actin-binding</keyword>
<keyword id="KW-0025">Alternative splicing</keyword>
<keyword id="KW-0963">Cytoplasm</keyword>
<keyword id="KW-0206">Cytoskeleton</keyword>
<keyword id="KW-0217">Developmental protein</keyword>
<keyword id="KW-0880">Kelch repeat</keyword>
<keyword id="KW-0539">Nucleus</keyword>
<keyword id="KW-1267">Proteomics identification</keyword>
<keyword id="KW-1185">Reference proteome</keyword>
<keyword id="KW-0677">Repeat</keyword>
<keyword id="KW-0832">Ubl conjugation</keyword>
<feature type="chain" id="PRO_0000119068" description="Ectoderm-neural cortex protein 1">
    <location>
        <begin position="1"/>
        <end position="589"/>
    </location>
</feature>
<feature type="domain" description="BTB" evidence="1">
    <location>
        <begin position="46"/>
        <end position="114"/>
    </location>
</feature>
<feature type="repeat" description="Kelch 1">
    <location>
        <begin position="296"/>
        <end position="340"/>
    </location>
</feature>
<feature type="repeat" description="Kelch 2">
    <location>
        <begin position="341"/>
        <end position="388"/>
    </location>
</feature>
<feature type="repeat" description="Kelch 3">
    <location>
        <begin position="389"/>
        <end position="444"/>
    </location>
</feature>
<feature type="repeat" description="Kelch 4">
    <location>
        <begin position="446"/>
        <end position="492"/>
    </location>
</feature>
<feature type="repeat" description="Kelch 5">
    <location>
        <begin position="494"/>
        <end position="538"/>
    </location>
</feature>
<feature type="repeat" description="Kelch 6">
    <location>
        <begin position="539"/>
        <end position="585"/>
    </location>
</feature>
<feature type="splice variant" id="VSP_045074" description="In isoform 2." evidence="5">
    <location>
        <begin position="1"/>
        <end position="73"/>
    </location>
</feature>
<feature type="sequence variant" id="VAR_050040" description="In dbSNP:rs16872126.">
    <original>I</original>
    <variation>S</variation>
    <location>
        <position position="256"/>
    </location>
</feature>
<feature type="sequence conflict" description="In Ref. 4; BAG58153." evidence="6" ref="4">
    <original>S</original>
    <variation>F</variation>
    <location>
        <position position="108"/>
    </location>
</feature>
<feature type="sequence conflict" description="In Ref. 1." evidence="6" ref="1">
    <original>INEENAESLLEAGDMLEFQ</original>
    <variation>HQLEGKCRNSLLGSLVTCWSFK</variation>
    <location>
        <begin position="112"/>
        <end position="130"/>
    </location>
</feature>
<feature type="sequence conflict" description="In Ref. 1; AAC39532." evidence="6" ref="1">
    <original>RL</original>
    <variation>TR</variation>
    <location>
        <begin position="237"/>
        <end position="238"/>
    </location>
</feature>
<feature type="sequence conflict" description="In Ref. 4; BAG58153." evidence="6" ref="4">
    <original>R</original>
    <variation>M</variation>
    <location>
        <position position="378"/>
    </location>
</feature>
<feature type="sequence conflict" description="In Ref. 2; AAC64498." evidence="6" ref="2">
    <original>C</original>
    <variation>S</variation>
    <location>
        <position position="402"/>
    </location>
</feature>
<feature type="sequence conflict" description="In Ref. 1." evidence="6" ref="1">
    <original>V</original>
    <variation>A</variation>
    <location>
        <position position="427"/>
    </location>
</feature>
<feature type="sequence conflict" description="In Ref. 1." evidence="6" ref="1">
    <original>LREGVSNAA</original>
    <variation>RPRRRYNCAQ</variation>
    <location>
        <begin position="430"/>
        <end position="438"/>
    </location>
</feature>
<feature type="sequence conflict" description="In Ref. 1; AAC39532." evidence="6" ref="1">
    <original>YTAAAVLGNQIFIMGGDTEFSACSAYKFNSETYQWTKVGDVTAKRMSCHAVASGNKLYVVGGYFGIQRCKTLDCYDPTLDVWNSITTVPYSLIPTAFVSTWKHLPS</original>
    <variation>IHSQASCPGGTQDFLLWGVIQNFSACFCL</variation>
    <location>
        <begin position="484"/>
        <end position="589"/>
    </location>
</feature>
<protein>
    <recommendedName>
        <fullName>Ectoderm-neural cortex protein 1</fullName>
        <shortName>ENC-1</shortName>
    </recommendedName>
    <alternativeName>
        <fullName>Kelch-like protein 37</fullName>
    </alternativeName>
    <alternativeName>
        <fullName>Nuclear matrix protein NRP/B</fullName>
    </alternativeName>
    <alternativeName>
        <fullName>p53-induced gene 10 protein</fullName>
    </alternativeName>
</protein>
<organism>
    <name type="scientific">Homo sapiens</name>
    <name type="common">Human</name>
    <dbReference type="NCBI Taxonomy" id="9606"/>
    <lineage>
        <taxon>Eukaryota</taxon>
        <taxon>Metazoa</taxon>
        <taxon>Chordata</taxon>
        <taxon>Craniata</taxon>
        <taxon>Vertebrata</taxon>
        <taxon>Euteleostomi</taxon>
        <taxon>Mammalia</taxon>
        <taxon>Eutheria</taxon>
        <taxon>Euarchontoglires</taxon>
        <taxon>Primates</taxon>
        <taxon>Haplorrhini</taxon>
        <taxon>Catarrhini</taxon>
        <taxon>Hominidae</taxon>
        <taxon>Homo</taxon>
    </lineage>
</organism>
<dbReference type="EMBL" id="AF010314">
    <property type="protein sequence ID" value="AAC39532.1"/>
    <property type="molecule type" value="mRNA"/>
</dbReference>
<dbReference type="EMBL" id="AF005381">
    <property type="protein sequence ID" value="AAC64498.1"/>
    <property type="molecule type" value="mRNA"/>
</dbReference>
<dbReference type="EMBL" id="AF059611">
    <property type="protein sequence ID" value="AAC26109.1"/>
    <property type="molecule type" value="mRNA"/>
</dbReference>
<dbReference type="EMBL" id="AK295128">
    <property type="protein sequence ID" value="BAG58153.1"/>
    <property type="molecule type" value="mRNA"/>
</dbReference>
<dbReference type="EMBL" id="AC026405">
    <property type="status" value="NOT_ANNOTATED_CDS"/>
    <property type="molecule type" value="Genomic_DNA"/>
</dbReference>
<dbReference type="EMBL" id="BC000418">
    <property type="protein sequence ID" value="AAH00418.1"/>
    <property type="molecule type" value="mRNA"/>
</dbReference>
<dbReference type="CCDS" id="CCDS4021.1">
    <molecule id="O14682-1"/>
</dbReference>
<dbReference type="CCDS" id="CCDS58958.1">
    <molecule id="O14682-2"/>
</dbReference>
<dbReference type="RefSeq" id="NP_001243503.1">
    <molecule id="O14682-1"/>
    <property type="nucleotide sequence ID" value="NM_001256574.2"/>
</dbReference>
<dbReference type="RefSeq" id="NP_001243504.1">
    <molecule id="O14682-1"/>
    <property type="nucleotide sequence ID" value="NM_001256575.2"/>
</dbReference>
<dbReference type="RefSeq" id="NP_001243505.1">
    <molecule id="O14682-2"/>
    <property type="nucleotide sequence ID" value="NM_001256576.2"/>
</dbReference>
<dbReference type="RefSeq" id="NP_003624.1">
    <molecule id="O14682-1"/>
    <property type="nucleotide sequence ID" value="NM_003633.4"/>
</dbReference>
<dbReference type="RefSeq" id="XP_011541998.1">
    <molecule id="O14682-1"/>
    <property type="nucleotide sequence ID" value="XM_011543696.4"/>
</dbReference>
<dbReference type="RefSeq" id="XP_011541999.1">
    <molecule id="O14682-1"/>
    <property type="nucleotide sequence ID" value="XM_011543697.4"/>
</dbReference>
<dbReference type="RefSeq" id="XP_054209701.1">
    <molecule id="O14682-1"/>
    <property type="nucleotide sequence ID" value="XM_054353726.1"/>
</dbReference>
<dbReference type="RefSeq" id="XP_054209702.1">
    <molecule id="O14682-1"/>
    <property type="nucleotide sequence ID" value="XM_054353727.1"/>
</dbReference>
<dbReference type="SMR" id="O14682"/>
<dbReference type="BioGRID" id="114079">
    <property type="interactions" value="23"/>
</dbReference>
<dbReference type="ComplexPortal" id="CPX-8241">
    <property type="entry name" value="CRL3 E3 ubiquitin ligase complex, ENC1 variant"/>
</dbReference>
<dbReference type="CORUM" id="O14682"/>
<dbReference type="FunCoup" id="O14682">
    <property type="interactions" value="597"/>
</dbReference>
<dbReference type="IntAct" id="O14682">
    <property type="interactions" value="18"/>
</dbReference>
<dbReference type="STRING" id="9606.ENSP00000499185"/>
<dbReference type="GlyGen" id="O14682">
    <property type="glycosylation" value="1 site, 1 O-linked glycan (1 site)"/>
</dbReference>
<dbReference type="iPTMnet" id="O14682"/>
<dbReference type="PhosphoSitePlus" id="O14682"/>
<dbReference type="BioMuta" id="ENC1"/>
<dbReference type="jPOST" id="O14682"/>
<dbReference type="MassIVE" id="O14682"/>
<dbReference type="PaxDb" id="9606-ENSP00000479101"/>
<dbReference type="PeptideAtlas" id="O14682"/>
<dbReference type="ProteomicsDB" id="20177"/>
<dbReference type="ProteomicsDB" id="48165">
    <molecule id="O14682-1"/>
</dbReference>
<dbReference type="Antibodypedia" id="24333">
    <property type="antibodies" value="273 antibodies from 35 providers"/>
</dbReference>
<dbReference type="DNASU" id="8507"/>
<dbReference type="Ensembl" id="ENST00000302351.9">
    <molecule id="O14682-1"/>
    <property type="protein sequence ID" value="ENSP00000306356.4"/>
    <property type="gene ID" value="ENSG00000171617.16"/>
</dbReference>
<dbReference type="Ensembl" id="ENST00000510316.5">
    <molecule id="O14682-2"/>
    <property type="protein sequence ID" value="ENSP00000423804.1"/>
    <property type="gene ID" value="ENSG00000171617.16"/>
</dbReference>
<dbReference type="Ensembl" id="ENST00000618628.4">
    <molecule id="O14682-1"/>
    <property type="protein sequence ID" value="ENSP00000479101.1"/>
    <property type="gene ID" value="ENSG00000171617.16"/>
</dbReference>
<dbReference type="Ensembl" id="ENST00000651128.1">
    <molecule id="O14682-1"/>
    <property type="protein sequence ID" value="ENSP00000499185.1"/>
    <property type="gene ID" value="ENSG00000171617.16"/>
</dbReference>
<dbReference type="GeneID" id="8507"/>
<dbReference type="KEGG" id="hsa:8507"/>
<dbReference type="MANE-Select" id="ENST00000302351.9">
    <property type="protein sequence ID" value="ENSP00000306356.4"/>
    <property type="RefSeq nucleotide sequence ID" value="NM_003633.4"/>
    <property type="RefSeq protein sequence ID" value="NP_003624.1"/>
</dbReference>
<dbReference type="UCSC" id="uc011css.4">
    <molecule id="O14682-1"/>
    <property type="organism name" value="human"/>
</dbReference>
<dbReference type="AGR" id="HGNC:3345"/>
<dbReference type="CTD" id="8507"/>
<dbReference type="DisGeNET" id="8507"/>
<dbReference type="GeneCards" id="ENC1"/>
<dbReference type="HGNC" id="HGNC:3345">
    <property type="gene designation" value="ENC1"/>
</dbReference>
<dbReference type="HPA" id="ENSG00000171617">
    <property type="expression patterns" value="Tissue enriched (brain)"/>
</dbReference>
<dbReference type="MIM" id="605173">
    <property type="type" value="gene"/>
</dbReference>
<dbReference type="neXtProt" id="NX_O14682"/>
<dbReference type="OpenTargets" id="ENSG00000171617"/>
<dbReference type="PharmGKB" id="PA27782"/>
<dbReference type="VEuPathDB" id="HostDB:ENSG00000171617"/>
<dbReference type="eggNOG" id="KOG4441">
    <property type="taxonomic scope" value="Eukaryota"/>
</dbReference>
<dbReference type="GeneTree" id="ENSGT00950000182983"/>
<dbReference type="HOGENOM" id="CLU_004253_14_6_1"/>
<dbReference type="InParanoid" id="O14682"/>
<dbReference type="OMA" id="KMSVSMH"/>
<dbReference type="OrthoDB" id="6359816at2759"/>
<dbReference type="PAN-GO" id="O14682">
    <property type="GO annotations" value="3 GO annotations based on evolutionary models"/>
</dbReference>
<dbReference type="PhylomeDB" id="O14682"/>
<dbReference type="TreeFam" id="TF329218"/>
<dbReference type="PathwayCommons" id="O14682"/>
<dbReference type="SignaLink" id="O14682"/>
<dbReference type="BioGRID-ORCS" id="8507">
    <property type="hits" value="10 hits in 1193 CRISPR screens"/>
</dbReference>
<dbReference type="ChiTaRS" id="ENC1">
    <property type="organism name" value="human"/>
</dbReference>
<dbReference type="GeneWiki" id="ENC1"/>
<dbReference type="GenomeRNAi" id="8507"/>
<dbReference type="Pharos" id="O14682">
    <property type="development level" value="Tbio"/>
</dbReference>
<dbReference type="PRO" id="PR:O14682"/>
<dbReference type="Proteomes" id="UP000005640">
    <property type="component" value="Chromosome 5"/>
</dbReference>
<dbReference type="RNAct" id="O14682">
    <property type="molecule type" value="protein"/>
</dbReference>
<dbReference type="Bgee" id="ENSG00000171617">
    <property type="expression patterns" value="Expressed in Brodmann (1909) area 10 and 198 other cell types or tissues"/>
</dbReference>
<dbReference type="ExpressionAtlas" id="O14682">
    <property type="expression patterns" value="baseline and differential"/>
</dbReference>
<dbReference type="GO" id="GO:0000785">
    <property type="term" value="C:chromatin"/>
    <property type="evidence" value="ECO:0007669"/>
    <property type="project" value="Ensembl"/>
</dbReference>
<dbReference type="GO" id="GO:0031463">
    <property type="term" value="C:Cul3-RING ubiquitin ligase complex"/>
    <property type="evidence" value="ECO:0000314"/>
    <property type="project" value="UniProtKB"/>
</dbReference>
<dbReference type="GO" id="GO:0005737">
    <property type="term" value="C:cytoplasm"/>
    <property type="evidence" value="ECO:0000314"/>
    <property type="project" value="UniProtKB"/>
</dbReference>
<dbReference type="GO" id="GO:0005856">
    <property type="term" value="C:cytoskeleton"/>
    <property type="evidence" value="ECO:0007669"/>
    <property type="project" value="UniProtKB-SubCell"/>
</dbReference>
<dbReference type="GO" id="GO:0043025">
    <property type="term" value="C:neuronal cell body"/>
    <property type="evidence" value="ECO:0007669"/>
    <property type="project" value="Ensembl"/>
</dbReference>
<dbReference type="GO" id="GO:0016363">
    <property type="term" value="C:nuclear matrix"/>
    <property type="evidence" value="ECO:0007669"/>
    <property type="project" value="UniProtKB-SubCell"/>
</dbReference>
<dbReference type="GO" id="GO:0005654">
    <property type="term" value="C:nucleoplasm"/>
    <property type="evidence" value="ECO:0007669"/>
    <property type="project" value="Ensembl"/>
</dbReference>
<dbReference type="GO" id="GO:0005634">
    <property type="term" value="C:nucleus"/>
    <property type="evidence" value="ECO:0000304"/>
    <property type="project" value="ProtInc"/>
</dbReference>
<dbReference type="GO" id="GO:0003779">
    <property type="term" value="F:actin binding"/>
    <property type="evidence" value="ECO:0007669"/>
    <property type="project" value="UniProtKB-KW"/>
</dbReference>
<dbReference type="GO" id="GO:0017148">
    <property type="term" value="P:negative regulation of translation"/>
    <property type="evidence" value="ECO:0000314"/>
    <property type="project" value="UniProtKB"/>
</dbReference>
<dbReference type="GO" id="GO:0007399">
    <property type="term" value="P:nervous system development"/>
    <property type="evidence" value="ECO:0000304"/>
    <property type="project" value="ProtInc"/>
</dbReference>
<dbReference type="GO" id="GO:0010976">
    <property type="term" value="P:positive regulation of neuron projection development"/>
    <property type="evidence" value="ECO:0007669"/>
    <property type="project" value="Ensembl"/>
</dbReference>
<dbReference type="GO" id="GO:0010499">
    <property type="term" value="P:proteasomal ubiquitin-independent protein catabolic process"/>
    <property type="evidence" value="ECO:0000314"/>
    <property type="project" value="UniProtKB"/>
</dbReference>
<dbReference type="GO" id="GO:0016567">
    <property type="term" value="P:protein ubiquitination"/>
    <property type="evidence" value="ECO:0000314"/>
    <property type="project" value="UniProtKB"/>
</dbReference>
<dbReference type="CDD" id="cd18515">
    <property type="entry name" value="BACK_KLHL37_ENC1"/>
    <property type="match status" value="1"/>
</dbReference>
<dbReference type="CDD" id="cd18267">
    <property type="entry name" value="BTB_POZ_KLHL37_ENC1"/>
    <property type="match status" value="1"/>
</dbReference>
<dbReference type="FunFam" id="2.120.10.80:FF:000003">
    <property type="entry name" value="Ectoderm-neural cortex protein 1"/>
    <property type="match status" value="1"/>
</dbReference>
<dbReference type="FunFam" id="2.120.10.80:FF:000004">
    <property type="entry name" value="Ectoderm-neural cortex protein 1"/>
    <property type="match status" value="1"/>
</dbReference>
<dbReference type="FunFam" id="3.30.710.10:FF:000023">
    <property type="entry name" value="Ectoderm-neural cortex protein 1"/>
    <property type="match status" value="1"/>
</dbReference>
<dbReference type="FunFam" id="1.25.40.420:FF:000001">
    <property type="entry name" value="Kelch-like family member 12"/>
    <property type="match status" value="1"/>
</dbReference>
<dbReference type="Gene3D" id="1.25.40.420">
    <property type="match status" value="1"/>
</dbReference>
<dbReference type="Gene3D" id="2.120.10.80">
    <property type="entry name" value="Kelch-type beta propeller"/>
    <property type="match status" value="2"/>
</dbReference>
<dbReference type="Gene3D" id="3.30.710.10">
    <property type="entry name" value="Potassium Channel Kv1.1, Chain A"/>
    <property type="match status" value="1"/>
</dbReference>
<dbReference type="InterPro" id="IPR011705">
    <property type="entry name" value="BACK"/>
</dbReference>
<dbReference type="InterPro" id="IPR017096">
    <property type="entry name" value="BTB-kelch_protein"/>
</dbReference>
<dbReference type="InterPro" id="IPR000210">
    <property type="entry name" value="BTB/POZ_dom"/>
</dbReference>
<dbReference type="InterPro" id="IPR047097">
    <property type="entry name" value="ENC1_BACK"/>
</dbReference>
<dbReference type="InterPro" id="IPR030562">
    <property type="entry name" value="ENC1_BTB_POZ_dom"/>
</dbReference>
<dbReference type="InterPro" id="IPR015915">
    <property type="entry name" value="Kelch-typ_b-propeller"/>
</dbReference>
<dbReference type="InterPro" id="IPR006652">
    <property type="entry name" value="Kelch_1"/>
</dbReference>
<dbReference type="InterPro" id="IPR011333">
    <property type="entry name" value="SKP1/BTB/POZ_sf"/>
</dbReference>
<dbReference type="PANTHER" id="PTHR24412:SF496">
    <property type="entry name" value="ECTODERM-NEURAL CORTEX PROTEIN 1"/>
    <property type="match status" value="1"/>
</dbReference>
<dbReference type="PANTHER" id="PTHR24412">
    <property type="entry name" value="KELCH PROTEIN"/>
    <property type="match status" value="1"/>
</dbReference>
<dbReference type="Pfam" id="PF07707">
    <property type="entry name" value="BACK"/>
    <property type="match status" value="1"/>
</dbReference>
<dbReference type="Pfam" id="PF00651">
    <property type="entry name" value="BTB"/>
    <property type="match status" value="1"/>
</dbReference>
<dbReference type="Pfam" id="PF01344">
    <property type="entry name" value="Kelch_1"/>
    <property type="match status" value="1"/>
</dbReference>
<dbReference type="Pfam" id="PF24681">
    <property type="entry name" value="Kelch_KLHDC2_KLHL20_DRC7"/>
    <property type="match status" value="1"/>
</dbReference>
<dbReference type="PIRSF" id="PIRSF037037">
    <property type="entry name" value="Kelch-like_protein_gigaxonin"/>
    <property type="match status" value="1"/>
</dbReference>
<dbReference type="SMART" id="SM00875">
    <property type="entry name" value="BACK"/>
    <property type="match status" value="1"/>
</dbReference>
<dbReference type="SMART" id="SM00225">
    <property type="entry name" value="BTB"/>
    <property type="match status" value="1"/>
</dbReference>
<dbReference type="SMART" id="SM00612">
    <property type="entry name" value="Kelch"/>
    <property type="match status" value="6"/>
</dbReference>
<dbReference type="SUPFAM" id="SSF117281">
    <property type="entry name" value="Kelch motif"/>
    <property type="match status" value="1"/>
</dbReference>
<dbReference type="SUPFAM" id="SSF54695">
    <property type="entry name" value="POZ domain"/>
    <property type="match status" value="1"/>
</dbReference>
<dbReference type="PROSITE" id="PS50097">
    <property type="entry name" value="BTB"/>
    <property type="match status" value="1"/>
</dbReference>
<name>ENC1_HUMAN</name>
<sequence>MSVSVHENRKSRASSGSINIYLFHKSSYADSVLTHLNLLRQQRLFTDVLLHAGNRTFPCHRAVLAACSRYFEAMFSGGLKESQDSEVNFDNSIHPEVLELLLDYAYSSRVIINEENAESLLEAGDMLEFQDIRDACAEFLEKNLHPTNCLGMLLLSDAHQCTKLYELSWRMCLSNFQTIRKNEDFLQLPQDMVVQLLSSEELETEDERLVYESAINWISYDLKKRYCYLPELLQTVRLALLPAIYLMENVAMEELITKQRKSKEIVEEAIRCKLKILQNDGVVTSLCARPRKTGHALFLLGGQTFMCDKLYLVDQKAKEIIPKADIPSPRKEFSACAIGCKVYITGGRGSENGVSKDVWVYDTLHEEWSKAAPMLVARFGHGSAELKHCLYVVGGHTAATGCLPASPSVSLKQVEHYDPTINKWTMVAPLREGVSNAAVVSAKLKLFAFGGTSVSHDKLPKVQCYDQCENRWTVPATCPQPWRYTAAAVLGNQIFIMGGDTEFSACSAYKFNSETYQWTKVGDVTAKRMSCHAVASGNKLYVVGGYFGIQRCKTLDCYDPTLDVWNSITTVPYSLIPTAFVSTWKHLPS</sequence>
<evidence type="ECO:0000255" key="1">
    <source>
        <dbReference type="PROSITE-ProRule" id="PRU00037"/>
    </source>
</evidence>
<evidence type="ECO:0000269" key="2">
    <source>
    </source>
</evidence>
<evidence type="ECO:0000269" key="3">
    <source>
    </source>
</evidence>
<evidence type="ECO:0000269" key="4">
    <source>
    </source>
</evidence>
<evidence type="ECO:0000303" key="5">
    <source>
    </source>
</evidence>
<evidence type="ECO:0000305" key="6"/>
<gene>
    <name type="primary">ENC1</name>
    <name type="synonym">KLHL37</name>
    <name type="synonym">NRPB</name>
    <name type="synonym">PIG10</name>
</gene>
<reference key="1">
    <citation type="journal article" date="1997" name="Nature">
        <title>A model for p53-induced apoptosis.</title>
        <authorList>
            <person name="Polyak K."/>
            <person name="Xia Y."/>
            <person name="Zweier J.L."/>
            <person name="Kinzler K.W."/>
            <person name="Vogelstein B."/>
        </authorList>
    </citation>
    <scope>NUCLEOTIDE SEQUENCE [MRNA] (ISOFORM 1)</scope>
    <scope>INDUCTION BY TP53</scope>
    <source>
        <tissue>Colon cancer</tissue>
    </source>
</reference>
<reference key="2">
    <citation type="journal article" date="1998" name="Exp. Cell Res.">
        <title>Cloning of human ENC-1 and evaluation of its expression and regulation in nervous system tumors.</title>
        <authorList>
            <person name="Hernandez M.-C."/>
            <person name="Andres-Barquin P.J."/>
            <person name="Holt I."/>
            <person name="Israel M.A."/>
        </authorList>
    </citation>
    <scope>NUCLEOTIDE SEQUENCE [MRNA] (ISOFORM 1)</scope>
</reference>
<reference key="3">
    <citation type="journal article" date="1998" name="J. Cell Biol.">
        <title>NRP/B, a novel nuclear matrix protein, associates with p110(RB) and is involved in neuronal differentiation.</title>
        <authorList>
            <person name="Kim T.-A."/>
            <person name="Lim J."/>
            <person name="Ota S."/>
            <person name="Raja S."/>
            <person name="Rogers R."/>
            <person name="Rivnay B."/>
            <person name="Avraham H."/>
            <person name="Avraham S."/>
        </authorList>
    </citation>
    <scope>NUCLEOTIDE SEQUENCE [MRNA] (ISOFORM 1)</scope>
    <source>
        <tissue>Fetal brain</tissue>
        <tissue>Hippocampus</tissue>
    </source>
</reference>
<reference key="4">
    <citation type="journal article" date="2004" name="Nat. Genet.">
        <title>Complete sequencing and characterization of 21,243 full-length human cDNAs.</title>
        <authorList>
            <person name="Ota T."/>
            <person name="Suzuki Y."/>
            <person name="Nishikawa T."/>
            <person name="Otsuki T."/>
            <person name="Sugiyama T."/>
            <person name="Irie R."/>
            <person name="Wakamatsu A."/>
            <person name="Hayashi K."/>
            <person name="Sato H."/>
            <person name="Nagai K."/>
            <person name="Kimura K."/>
            <person name="Makita H."/>
            <person name="Sekine M."/>
            <person name="Obayashi M."/>
            <person name="Nishi T."/>
            <person name="Shibahara T."/>
            <person name="Tanaka T."/>
            <person name="Ishii S."/>
            <person name="Yamamoto J."/>
            <person name="Saito K."/>
            <person name="Kawai Y."/>
            <person name="Isono Y."/>
            <person name="Nakamura Y."/>
            <person name="Nagahari K."/>
            <person name="Murakami K."/>
            <person name="Yasuda T."/>
            <person name="Iwayanagi T."/>
            <person name="Wagatsuma M."/>
            <person name="Shiratori A."/>
            <person name="Sudo H."/>
            <person name="Hosoiri T."/>
            <person name="Kaku Y."/>
            <person name="Kodaira H."/>
            <person name="Kondo H."/>
            <person name="Sugawara M."/>
            <person name="Takahashi M."/>
            <person name="Kanda K."/>
            <person name="Yokoi T."/>
            <person name="Furuya T."/>
            <person name="Kikkawa E."/>
            <person name="Omura Y."/>
            <person name="Abe K."/>
            <person name="Kamihara K."/>
            <person name="Katsuta N."/>
            <person name="Sato K."/>
            <person name="Tanikawa M."/>
            <person name="Yamazaki M."/>
            <person name="Ninomiya K."/>
            <person name="Ishibashi T."/>
            <person name="Yamashita H."/>
            <person name="Murakawa K."/>
            <person name="Fujimori K."/>
            <person name="Tanai H."/>
            <person name="Kimata M."/>
            <person name="Watanabe M."/>
            <person name="Hiraoka S."/>
            <person name="Chiba Y."/>
            <person name="Ishida S."/>
            <person name="Ono Y."/>
            <person name="Takiguchi S."/>
            <person name="Watanabe S."/>
            <person name="Yosida M."/>
            <person name="Hotuta T."/>
            <person name="Kusano J."/>
            <person name="Kanehori K."/>
            <person name="Takahashi-Fujii A."/>
            <person name="Hara H."/>
            <person name="Tanase T.-O."/>
            <person name="Nomura Y."/>
            <person name="Togiya S."/>
            <person name="Komai F."/>
            <person name="Hara R."/>
            <person name="Takeuchi K."/>
            <person name="Arita M."/>
            <person name="Imose N."/>
            <person name="Musashino K."/>
            <person name="Yuuki H."/>
            <person name="Oshima A."/>
            <person name="Sasaki N."/>
            <person name="Aotsuka S."/>
            <person name="Yoshikawa Y."/>
            <person name="Matsunawa H."/>
            <person name="Ichihara T."/>
            <person name="Shiohata N."/>
            <person name="Sano S."/>
            <person name="Moriya S."/>
            <person name="Momiyama H."/>
            <person name="Satoh N."/>
            <person name="Takami S."/>
            <person name="Terashima Y."/>
            <person name="Suzuki O."/>
            <person name="Nakagawa S."/>
            <person name="Senoh A."/>
            <person name="Mizoguchi H."/>
            <person name="Goto Y."/>
            <person name="Shimizu F."/>
            <person name="Wakebe H."/>
            <person name="Hishigaki H."/>
            <person name="Watanabe T."/>
            <person name="Sugiyama A."/>
            <person name="Takemoto M."/>
            <person name="Kawakami B."/>
            <person name="Yamazaki M."/>
            <person name="Watanabe K."/>
            <person name="Kumagai A."/>
            <person name="Itakura S."/>
            <person name="Fukuzumi Y."/>
            <person name="Fujimori Y."/>
            <person name="Komiyama M."/>
            <person name="Tashiro H."/>
            <person name="Tanigami A."/>
            <person name="Fujiwara T."/>
            <person name="Ono T."/>
            <person name="Yamada K."/>
            <person name="Fujii Y."/>
            <person name="Ozaki K."/>
            <person name="Hirao M."/>
            <person name="Ohmori Y."/>
            <person name="Kawabata A."/>
            <person name="Hikiji T."/>
            <person name="Kobatake N."/>
            <person name="Inagaki H."/>
            <person name="Ikema Y."/>
            <person name="Okamoto S."/>
            <person name="Okitani R."/>
            <person name="Kawakami T."/>
            <person name="Noguchi S."/>
            <person name="Itoh T."/>
            <person name="Shigeta K."/>
            <person name="Senba T."/>
            <person name="Matsumura K."/>
            <person name="Nakajima Y."/>
            <person name="Mizuno T."/>
            <person name="Morinaga M."/>
            <person name="Sasaki M."/>
            <person name="Togashi T."/>
            <person name="Oyama M."/>
            <person name="Hata H."/>
            <person name="Watanabe M."/>
            <person name="Komatsu T."/>
            <person name="Mizushima-Sugano J."/>
            <person name="Satoh T."/>
            <person name="Shirai Y."/>
            <person name="Takahashi Y."/>
            <person name="Nakagawa K."/>
            <person name="Okumura K."/>
            <person name="Nagase T."/>
            <person name="Nomura N."/>
            <person name="Kikuchi H."/>
            <person name="Masuho Y."/>
            <person name="Yamashita R."/>
            <person name="Nakai K."/>
            <person name="Yada T."/>
            <person name="Nakamura Y."/>
            <person name="Ohara O."/>
            <person name="Isogai T."/>
            <person name="Sugano S."/>
        </authorList>
    </citation>
    <scope>NUCLEOTIDE SEQUENCE [LARGE SCALE MRNA] (ISOFORM 2)</scope>
    <source>
        <tissue>Brain</tissue>
    </source>
</reference>
<reference key="5">
    <citation type="journal article" date="2004" name="Nature">
        <title>The DNA sequence and comparative analysis of human chromosome 5.</title>
        <authorList>
            <person name="Schmutz J."/>
            <person name="Martin J."/>
            <person name="Terry A."/>
            <person name="Couronne O."/>
            <person name="Grimwood J."/>
            <person name="Lowry S."/>
            <person name="Gordon L.A."/>
            <person name="Scott D."/>
            <person name="Xie G."/>
            <person name="Huang W."/>
            <person name="Hellsten U."/>
            <person name="Tran-Gyamfi M."/>
            <person name="She X."/>
            <person name="Prabhakar S."/>
            <person name="Aerts A."/>
            <person name="Altherr M."/>
            <person name="Bajorek E."/>
            <person name="Black S."/>
            <person name="Branscomb E."/>
            <person name="Caoile C."/>
            <person name="Challacombe J.F."/>
            <person name="Chan Y.M."/>
            <person name="Denys M."/>
            <person name="Detter J.C."/>
            <person name="Escobar J."/>
            <person name="Flowers D."/>
            <person name="Fotopulos D."/>
            <person name="Glavina T."/>
            <person name="Gomez M."/>
            <person name="Gonzales E."/>
            <person name="Goodstein D."/>
            <person name="Grigoriev I."/>
            <person name="Groza M."/>
            <person name="Hammon N."/>
            <person name="Hawkins T."/>
            <person name="Haydu L."/>
            <person name="Israni S."/>
            <person name="Jett J."/>
            <person name="Kadner K."/>
            <person name="Kimball H."/>
            <person name="Kobayashi A."/>
            <person name="Lopez F."/>
            <person name="Lou Y."/>
            <person name="Martinez D."/>
            <person name="Medina C."/>
            <person name="Morgan J."/>
            <person name="Nandkeshwar R."/>
            <person name="Noonan J.P."/>
            <person name="Pitluck S."/>
            <person name="Pollard M."/>
            <person name="Predki P."/>
            <person name="Priest J."/>
            <person name="Ramirez L."/>
            <person name="Retterer J."/>
            <person name="Rodriguez A."/>
            <person name="Rogers S."/>
            <person name="Salamov A."/>
            <person name="Salazar A."/>
            <person name="Thayer N."/>
            <person name="Tice H."/>
            <person name="Tsai M."/>
            <person name="Ustaszewska A."/>
            <person name="Vo N."/>
            <person name="Wheeler J."/>
            <person name="Wu K."/>
            <person name="Yang J."/>
            <person name="Dickson M."/>
            <person name="Cheng J.-F."/>
            <person name="Eichler E.E."/>
            <person name="Olsen A."/>
            <person name="Pennacchio L.A."/>
            <person name="Rokhsar D.S."/>
            <person name="Richardson P."/>
            <person name="Lucas S.M."/>
            <person name="Myers R.M."/>
            <person name="Rubin E.M."/>
        </authorList>
    </citation>
    <scope>NUCLEOTIDE SEQUENCE [LARGE SCALE GENOMIC DNA]</scope>
</reference>
<reference key="6">
    <citation type="journal article" date="2004" name="Genome Res.">
        <title>The status, quality, and expansion of the NIH full-length cDNA project: the Mammalian Gene Collection (MGC).</title>
        <authorList>
            <consortium name="The MGC Project Team"/>
        </authorList>
    </citation>
    <scope>NUCLEOTIDE SEQUENCE [LARGE SCALE MRNA] (ISOFORM 1)</scope>
    <source>
        <tissue>Muscle</tissue>
    </source>
</reference>
<reference key="7">
    <citation type="journal article" date="2005" name="J. Biol. Chem.">
        <title>Ubiquitination of Keap1, a BTB-Kelch substrate adaptor protein for Cul3, targets Keap1 for degradation by a proteasome-independent pathway.</title>
        <authorList>
            <person name="Zhang D.D."/>
            <person name="Lo S.C."/>
            <person name="Sun Z."/>
            <person name="Habib G.M."/>
            <person name="Lieberman M.W."/>
            <person name="Hannink M."/>
        </authorList>
    </citation>
    <scope>IDENTIFICATION IN A COMPLEX WITH CUL3 AND RBX1</scope>
    <scope>UBIQUITINATION</scope>
</reference>
<reference key="8">
    <citation type="journal article" date="2009" name="PLoS ONE">
        <title>Ectodermal-neural cortex 1 down-regulates Nrf2 at the translational level.</title>
        <authorList>
            <person name="Wang X.J."/>
            <person name="Zhang D.D."/>
        </authorList>
    </citation>
    <scope>FUNCTION</scope>
    <scope>SUBCELLULAR LOCATION</scope>
    <scope>INTERACTION WITH KEAP1</scope>
</reference>
<reference key="9">
    <citation type="journal article" date="2009" name="Sci. Signal.">
        <title>Quantitative phosphoproteomic analysis of T cell receptor signaling reveals system-wide modulation of protein-protein interactions.</title>
        <authorList>
            <person name="Mayya V."/>
            <person name="Lundgren D.H."/>
            <person name="Hwang S.-I."/>
            <person name="Rezaul K."/>
            <person name="Wu L."/>
            <person name="Eng J.K."/>
            <person name="Rodionov V."/>
            <person name="Han D.K."/>
        </authorList>
    </citation>
    <scope>IDENTIFICATION BY MASS SPECTROMETRY [LARGE SCALE ANALYSIS]</scope>
    <source>
        <tissue>Leukemic T-cell</tissue>
    </source>
</reference>
<comment type="function">
    <text evidence="3">Actin-binding protein involved in the regulation of neuronal process formation and in differentiation of neural crest cells. Down-regulates transcription factor NF2L2/NRF2 by decreasing the rate of protein synthesis and not via a ubiquitin-mediated proteasomal degradation mechanism.</text>
</comment>
<comment type="subunit">
    <text evidence="2 3">Binds to RB1. Hypophosphorylated RB1 associates with ENC1 during neuronal differentiation, while hyperphosphorylated RB1 associates with ENC1 in undifferentiating cells. Part of a complex that contains CUL3, RBX1 and ENC1. Interacts indirectly with KEAP1.</text>
</comment>
<comment type="interaction">
    <interactant intactId="EBI-6425462">
        <id>O14682</id>
    </interactant>
    <interactant intactId="EBI-466029">
        <id>P42858</id>
        <label>HTT</label>
    </interactant>
    <organismsDiffer>false</organismsDiffer>
    <experiments>4</experiments>
</comment>
<comment type="interaction">
    <interactant intactId="EBI-6425462">
        <id>O14682</id>
    </interactant>
    <interactant intactId="EBI-307104">
        <id>Q13501</id>
        <label>SQSTM1</label>
    </interactant>
    <organismsDiffer>false</organismsDiffer>
    <experiments>7</experiments>
</comment>
<comment type="subcellular location">
    <subcellularLocation>
        <location evidence="3">Nucleus matrix</location>
    </subcellularLocation>
    <subcellularLocation>
        <location evidence="3">Cytoplasm</location>
    </subcellularLocation>
    <subcellularLocation>
        <location evidence="3">Cytoplasm</location>
        <location evidence="3">Cytoskeleton</location>
    </subcellularLocation>
</comment>
<comment type="alternative products">
    <event type="alternative splicing"/>
    <isoform>
        <id>O14682-1</id>
        <name>1</name>
        <sequence type="displayed"/>
    </isoform>
    <isoform>
        <id>O14682-2</id>
        <name>2</name>
        <sequence type="described" ref="VSP_045074"/>
    </isoform>
</comment>
<comment type="tissue specificity">
    <text>Detected in fetal brain tissue, moderate expression in fetal heart, lung and kidney. Highly expressed in adult brain, particularly high in the hippocampus and amygdala, and spinal cord. Detectable in adult pancreas. May be down-regulated in neuroblastoma tumors.</text>
</comment>
<comment type="developmental stage">
    <text>Dramatically up-regulated upon neuronal differentiation.</text>
</comment>
<comment type="induction">
    <text evidence="4">By p53/TP53.</text>
</comment>
<comment type="PTM">
    <text evidence="2">Ubiquitinated by E3 ubiquitin ligase complex formed by CUL3 and RBX1 and probably targeted for proteasome-independent degradation. Quinone-induced oxidative stress increases its ubiquitination.</text>
</comment>
<comment type="online information" name="Atlas of Genetics and Cytogenetics in Oncology and Haematology">
    <link uri="https://atlasgeneticsoncology.org/gene/40451/NRPB"/>
</comment>